<keyword id="KW-0007">Acetylation</keyword>
<keyword id="KW-1185">Reference proteome</keyword>
<keyword id="KW-0687">Ribonucleoprotein</keyword>
<keyword id="KW-0689">Ribosomal protein</keyword>
<name>RS52_ARATH</name>
<comment type="tissue specificity">
    <text evidence="1">Expressed in root tips, lateral root primordia, leaf primordia, shoot apical meristem and vasculature of cotyledons.</text>
</comment>
<comment type="disruption phenotype">
    <text evidence="1">Embryonic lethality when homozygous, due to cell division arrest at early embryonic development stage.</text>
</comment>
<comment type="similarity">
    <text evidence="5">Belongs to the universal ribosomal protein uS7 family.</text>
</comment>
<organism>
    <name type="scientific">Arabidopsis thaliana</name>
    <name type="common">Mouse-ear cress</name>
    <dbReference type="NCBI Taxonomy" id="3702"/>
    <lineage>
        <taxon>Eukaryota</taxon>
        <taxon>Viridiplantae</taxon>
        <taxon>Streptophyta</taxon>
        <taxon>Embryophyta</taxon>
        <taxon>Tracheophyta</taxon>
        <taxon>Spermatophyta</taxon>
        <taxon>Magnoliopsida</taxon>
        <taxon>eudicotyledons</taxon>
        <taxon>Gunneridae</taxon>
        <taxon>Pentapetalae</taxon>
        <taxon>rosids</taxon>
        <taxon>malvids</taxon>
        <taxon>Brassicales</taxon>
        <taxon>Brassicaceae</taxon>
        <taxon>Camelineae</taxon>
        <taxon>Arabidopsis</taxon>
    </lineage>
</organism>
<gene>
    <name evidence="2" type="primary">RPS5B</name>
    <name evidence="3" type="synonym">AML1</name>
    <name type="ordered locus">At3g11940</name>
    <name type="ORF">F26K24.23</name>
    <name type="ORF">MEC18.4</name>
</gene>
<reference key="1">
    <citation type="journal article" date="2000" name="DNA Res.">
        <title>Structural analysis of Arabidopsis thaliana chromosome 3. II. Sequence features of the 4,251,695 bp regions covered by 90 P1, TAC and BAC clones.</title>
        <authorList>
            <person name="Kaneko T."/>
            <person name="Katoh T."/>
            <person name="Sato S."/>
            <person name="Nakamura Y."/>
            <person name="Asamizu E."/>
            <person name="Tabata S."/>
        </authorList>
    </citation>
    <scope>NUCLEOTIDE SEQUENCE [LARGE SCALE GENOMIC DNA]</scope>
    <source>
        <strain>cv. Columbia</strain>
    </source>
</reference>
<reference key="2">
    <citation type="journal article" date="2000" name="Nature">
        <title>Sequence and analysis of chromosome 3 of the plant Arabidopsis thaliana.</title>
        <authorList>
            <person name="Salanoubat M."/>
            <person name="Lemcke K."/>
            <person name="Rieger M."/>
            <person name="Ansorge W."/>
            <person name="Unseld M."/>
            <person name="Fartmann B."/>
            <person name="Valle G."/>
            <person name="Bloecker H."/>
            <person name="Perez-Alonso M."/>
            <person name="Obermaier B."/>
            <person name="Delseny M."/>
            <person name="Boutry M."/>
            <person name="Grivell L.A."/>
            <person name="Mache R."/>
            <person name="Puigdomenech P."/>
            <person name="De Simone V."/>
            <person name="Choisne N."/>
            <person name="Artiguenave F."/>
            <person name="Robert C."/>
            <person name="Brottier P."/>
            <person name="Wincker P."/>
            <person name="Cattolico L."/>
            <person name="Weissenbach J."/>
            <person name="Saurin W."/>
            <person name="Quetier F."/>
            <person name="Schaefer M."/>
            <person name="Mueller-Auer S."/>
            <person name="Gabel C."/>
            <person name="Fuchs M."/>
            <person name="Benes V."/>
            <person name="Wurmbach E."/>
            <person name="Drzonek H."/>
            <person name="Erfle H."/>
            <person name="Jordan N."/>
            <person name="Bangert S."/>
            <person name="Wiedelmann R."/>
            <person name="Kranz H."/>
            <person name="Voss H."/>
            <person name="Holland R."/>
            <person name="Brandt P."/>
            <person name="Nyakatura G."/>
            <person name="Vezzi A."/>
            <person name="D'Angelo M."/>
            <person name="Pallavicini A."/>
            <person name="Toppo S."/>
            <person name="Simionati B."/>
            <person name="Conrad A."/>
            <person name="Hornischer K."/>
            <person name="Kauer G."/>
            <person name="Loehnert T.-H."/>
            <person name="Nordsiek G."/>
            <person name="Reichelt J."/>
            <person name="Scharfe M."/>
            <person name="Schoen O."/>
            <person name="Bargues M."/>
            <person name="Terol J."/>
            <person name="Climent J."/>
            <person name="Navarro P."/>
            <person name="Collado C."/>
            <person name="Perez-Perez A."/>
            <person name="Ottenwaelder B."/>
            <person name="Duchemin D."/>
            <person name="Cooke R."/>
            <person name="Laudie M."/>
            <person name="Berger-Llauro C."/>
            <person name="Purnelle B."/>
            <person name="Masuy D."/>
            <person name="de Haan M."/>
            <person name="Maarse A.C."/>
            <person name="Alcaraz J.-P."/>
            <person name="Cottet A."/>
            <person name="Casacuberta E."/>
            <person name="Monfort A."/>
            <person name="Argiriou A."/>
            <person name="Flores M."/>
            <person name="Liguori R."/>
            <person name="Vitale D."/>
            <person name="Mannhaupt G."/>
            <person name="Haase D."/>
            <person name="Schoof H."/>
            <person name="Rudd S."/>
            <person name="Zaccaria P."/>
            <person name="Mewes H.-W."/>
            <person name="Mayer K.F.X."/>
            <person name="Kaul S."/>
            <person name="Town C.D."/>
            <person name="Koo H.L."/>
            <person name="Tallon L.J."/>
            <person name="Jenkins J."/>
            <person name="Rooney T."/>
            <person name="Rizzo M."/>
            <person name="Walts A."/>
            <person name="Utterback T."/>
            <person name="Fujii C.Y."/>
            <person name="Shea T.P."/>
            <person name="Creasy T.H."/>
            <person name="Haas B."/>
            <person name="Maiti R."/>
            <person name="Wu D."/>
            <person name="Peterson J."/>
            <person name="Van Aken S."/>
            <person name="Pai G."/>
            <person name="Militscher J."/>
            <person name="Sellers P."/>
            <person name="Gill J.E."/>
            <person name="Feldblyum T.V."/>
            <person name="Preuss D."/>
            <person name="Lin X."/>
            <person name="Nierman W.C."/>
            <person name="Salzberg S.L."/>
            <person name="White O."/>
            <person name="Venter J.C."/>
            <person name="Fraser C.M."/>
            <person name="Kaneko T."/>
            <person name="Nakamura Y."/>
            <person name="Sato S."/>
            <person name="Kato T."/>
            <person name="Asamizu E."/>
            <person name="Sasamoto S."/>
            <person name="Kimura T."/>
            <person name="Idesawa K."/>
            <person name="Kawashima K."/>
            <person name="Kishida Y."/>
            <person name="Kiyokawa C."/>
            <person name="Kohara M."/>
            <person name="Matsumoto M."/>
            <person name="Matsuno A."/>
            <person name="Muraki A."/>
            <person name="Nakayama S."/>
            <person name="Nakazaki N."/>
            <person name="Shinpo S."/>
            <person name="Takeuchi C."/>
            <person name="Wada T."/>
            <person name="Watanabe A."/>
            <person name="Yamada M."/>
            <person name="Yasuda M."/>
            <person name="Tabata S."/>
        </authorList>
    </citation>
    <scope>NUCLEOTIDE SEQUENCE [LARGE SCALE GENOMIC DNA]</scope>
    <source>
        <strain>cv. Columbia</strain>
    </source>
</reference>
<reference key="3">
    <citation type="journal article" date="2017" name="Plant J.">
        <title>Araport11: a complete reannotation of the Arabidopsis thaliana reference genome.</title>
        <authorList>
            <person name="Cheng C.Y."/>
            <person name="Krishnakumar V."/>
            <person name="Chan A.P."/>
            <person name="Thibaud-Nissen F."/>
            <person name="Schobel S."/>
            <person name="Town C.D."/>
        </authorList>
    </citation>
    <scope>GENOME REANNOTATION</scope>
    <source>
        <strain>cv. Columbia</strain>
    </source>
</reference>
<reference key="4">
    <citation type="journal article" date="2003" name="Science">
        <title>Empirical analysis of transcriptional activity in the Arabidopsis genome.</title>
        <authorList>
            <person name="Yamada K."/>
            <person name="Lim J."/>
            <person name="Dale J.M."/>
            <person name="Chen H."/>
            <person name="Shinn P."/>
            <person name="Palm C.J."/>
            <person name="Southwick A.M."/>
            <person name="Wu H.C."/>
            <person name="Kim C.J."/>
            <person name="Nguyen M."/>
            <person name="Pham P.K."/>
            <person name="Cheuk R.F."/>
            <person name="Karlin-Newmann G."/>
            <person name="Liu S.X."/>
            <person name="Lam B."/>
            <person name="Sakano H."/>
            <person name="Wu T."/>
            <person name="Yu G."/>
            <person name="Miranda M."/>
            <person name="Quach H.L."/>
            <person name="Tripp M."/>
            <person name="Chang C.H."/>
            <person name="Lee J.M."/>
            <person name="Toriumi M.J."/>
            <person name="Chan M.M."/>
            <person name="Tang C.C."/>
            <person name="Onodera C.S."/>
            <person name="Deng J.M."/>
            <person name="Akiyama K."/>
            <person name="Ansari Y."/>
            <person name="Arakawa T."/>
            <person name="Banh J."/>
            <person name="Banno F."/>
            <person name="Bowser L."/>
            <person name="Brooks S.Y."/>
            <person name="Carninci P."/>
            <person name="Chao Q."/>
            <person name="Choy N."/>
            <person name="Enju A."/>
            <person name="Goldsmith A.D."/>
            <person name="Gurjal M."/>
            <person name="Hansen N.F."/>
            <person name="Hayashizaki Y."/>
            <person name="Johnson-Hopson C."/>
            <person name="Hsuan V.W."/>
            <person name="Iida K."/>
            <person name="Karnes M."/>
            <person name="Khan S."/>
            <person name="Koesema E."/>
            <person name="Ishida J."/>
            <person name="Jiang P.X."/>
            <person name="Jones T."/>
            <person name="Kawai J."/>
            <person name="Kamiya A."/>
            <person name="Meyers C."/>
            <person name="Nakajima M."/>
            <person name="Narusaka M."/>
            <person name="Seki M."/>
            <person name="Sakurai T."/>
            <person name="Satou M."/>
            <person name="Tamse R."/>
            <person name="Vaysberg M."/>
            <person name="Wallender E.K."/>
            <person name="Wong C."/>
            <person name="Yamamura Y."/>
            <person name="Yuan S."/>
            <person name="Shinozaki K."/>
            <person name="Davis R.W."/>
            <person name="Theologis A."/>
            <person name="Ecker J.R."/>
        </authorList>
    </citation>
    <scope>NUCLEOTIDE SEQUENCE [LARGE SCALE MRNA]</scope>
    <source>
        <strain>cv. Columbia</strain>
    </source>
</reference>
<reference key="5">
    <citation type="submission" date="2002-03" db="EMBL/GenBank/DDBJ databases">
        <title>Full-length cDNA from Arabidopsis thaliana.</title>
        <authorList>
            <person name="Brover V.V."/>
            <person name="Troukhan M.E."/>
            <person name="Alexandrov N.A."/>
            <person name="Lu Y.-P."/>
            <person name="Flavell R.B."/>
            <person name="Feldmann K.A."/>
        </authorList>
    </citation>
    <scope>NUCLEOTIDE SEQUENCE [LARGE SCALE MRNA]</scope>
</reference>
<reference key="6">
    <citation type="journal article" date="1993" name="Plant J.">
        <title>An inventory of 1152 expressed sequence tags obtained by partial sequencing of cDNAs from Arabidopsis thaliana.</title>
        <authorList>
            <person name="Hoefte H."/>
            <person name="Desprez T."/>
            <person name="Amselem J."/>
            <person name="Chiapello H."/>
            <person name="Rouze P."/>
            <person name="Caboche M."/>
            <person name="Moisan A."/>
            <person name="Jourjon M.-F."/>
            <person name="Charpenteau J.-L."/>
            <person name="Berthomieu P."/>
            <person name="Guerrier D."/>
            <person name="Giraudat J."/>
            <person name="Quigley F."/>
            <person name="Thomas F."/>
            <person name="Yu D.-Y."/>
            <person name="Mache R."/>
            <person name="Raynal M."/>
            <person name="Cooke R."/>
            <person name="Grellet F."/>
            <person name="Delseny M."/>
            <person name="Parmentier Y."/>
            <person name="de Marcillac G."/>
            <person name="Gigot C."/>
            <person name="Fleck J."/>
            <person name="Philipps G."/>
            <person name="Axelos M."/>
            <person name="Bardet C."/>
            <person name="Tremousaygue D."/>
            <person name="Lescure B."/>
        </authorList>
    </citation>
    <scope>NUCLEOTIDE SEQUENCE [LARGE SCALE MRNA] OF 1-83</scope>
    <source>
        <strain>cv. Columbia</strain>
    </source>
</reference>
<reference key="7">
    <citation type="journal article" date="2001" name="Development">
        <title>An Arabidopsis Minute-like phenotype caused by a semi-dominant mutation in a RIBOSOMAL PROTEIN S5 gene.</title>
        <authorList>
            <person name="Weijers D."/>
            <person name="Franke-van Dijk M."/>
            <person name="Vencken R.J."/>
            <person name="Quint A."/>
            <person name="Hooykaas P."/>
            <person name="Offringa R."/>
        </authorList>
    </citation>
    <scope>TISSUE SPECIFICITY</scope>
    <scope>DISRUPTION PHENOTYPE</scope>
</reference>
<reference key="8">
    <citation type="journal article" date="2001" name="Plant Physiol.">
        <title>The organization of cytoplasmic ribosomal protein genes in the Arabidopsis genome.</title>
        <authorList>
            <person name="Barakat A."/>
            <person name="Szick-Miranda K."/>
            <person name="Chang I.-F."/>
            <person name="Guyot R."/>
            <person name="Blanc G."/>
            <person name="Cooke R."/>
            <person name="Delseny M."/>
            <person name="Bailey-Serres J."/>
        </authorList>
    </citation>
    <scope>GENE FAMILY ORGANIZATION</scope>
    <scope>NOMENCLATURE</scope>
</reference>
<reference key="9">
    <citation type="journal article" date="2012" name="Mol. Cell. Proteomics">
        <title>Comparative large-scale characterisation of plant vs. mammal proteins reveals similar and idiosyncratic N-alpha acetylation features.</title>
        <authorList>
            <person name="Bienvenut W.V."/>
            <person name="Sumpton D."/>
            <person name="Martinez A."/>
            <person name="Lilla S."/>
            <person name="Espagne C."/>
            <person name="Meinnel T."/>
            <person name="Giglione C."/>
        </authorList>
    </citation>
    <scope>ACETYLATION [LARGE SCALE ANALYSIS] AT ALA-2</scope>
    <scope>CLEAVAGE OF INITIATOR METHIONINE [LARGE SCALE ANALYSIS]</scope>
    <scope>IDENTIFICATION BY MASS SPECTROMETRY [LARGE SCALE ANALYSIS]</scope>
</reference>
<reference key="10">
    <citation type="journal article" date="2023" name="Plant Cell">
        <title>An updated nomenclature for plant ribosomal protein genes.</title>
        <authorList>
            <person name="Scarpin M.R."/>
            <person name="Busche M."/>
            <person name="Martinez R.E."/>
            <person name="Harper L.C."/>
            <person name="Reiser L."/>
            <person name="Szakonyi D."/>
            <person name="Merchante C."/>
            <person name="Lan T."/>
            <person name="Xiong W."/>
            <person name="Mo B."/>
            <person name="Tang G."/>
            <person name="Chen X."/>
            <person name="Bailey-Serres J."/>
            <person name="Browning K.S."/>
            <person name="Brunkard J.O."/>
        </authorList>
    </citation>
    <scope>NOMENCLATURE</scope>
</reference>
<proteinExistence type="evidence at protein level"/>
<dbReference type="EMBL" id="AP002040">
    <property type="protein sequence ID" value="BAB03103.1"/>
    <property type="molecule type" value="Genomic_DNA"/>
</dbReference>
<dbReference type="EMBL" id="AC016795">
    <property type="protein sequence ID" value="AAF23210.1"/>
    <property type="molecule type" value="Genomic_DNA"/>
</dbReference>
<dbReference type="EMBL" id="CP002686">
    <property type="protein sequence ID" value="AEE75123.1"/>
    <property type="molecule type" value="Genomic_DNA"/>
</dbReference>
<dbReference type="EMBL" id="CP002686">
    <property type="protein sequence ID" value="AEE75124.1"/>
    <property type="molecule type" value="Genomic_DNA"/>
</dbReference>
<dbReference type="EMBL" id="AY045846">
    <property type="protein sequence ID" value="AAK76520.1"/>
    <property type="molecule type" value="mRNA"/>
</dbReference>
<dbReference type="EMBL" id="AY091376">
    <property type="protein sequence ID" value="AAM14315.1"/>
    <property type="molecule type" value="mRNA"/>
</dbReference>
<dbReference type="EMBL" id="AY086938">
    <property type="protein sequence ID" value="AAM64502.1"/>
    <property type="molecule type" value="mRNA"/>
</dbReference>
<dbReference type="EMBL" id="Z18496">
    <property type="protein sequence ID" value="CAA79205.1"/>
    <property type="molecule type" value="mRNA"/>
</dbReference>
<dbReference type="RefSeq" id="NP_187800.1">
    <property type="nucleotide sequence ID" value="NM_112027.2"/>
</dbReference>
<dbReference type="RefSeq" id="NP_850564.1">
    <property type="nucleotide sequence ID" value="NM_180233.3"/>
</dbReference>
<dbReference type="SMR" id="P51427"/>
<dbReference type="BioGRID" id="5701">
    <property type="interactions" value="118"/>
</dbReference>
<dbReference type="FunCoup" id="P51427">
    <property type="interactions" value="3876"/>
</dbReference>
<dbReference type="IntAct" id="P51427">
    <property type="interactions" value="1"/>
</dbReference>
<dbReference type="STRING" id="3702.P51427"/>
<dbReference type="iPTMnet" id="P51427"/>
<dbReference type="PaxDb" id="3702-AT3G11940.1"/>
<dbReference type="ProteomicsDB" id="226797"/>
<dbReference type="EnsemblPlants" id="AT3G11940.1">
    <property type="protein sequence ID" value="AT3G11940.1"/>
    <property type="gene ID" value="AT3G11940"/>
</dbReference>
<dbReference type="EnsemblPlants" id="AT3G11940.2">
    <property type="protein sequence ID" value="AT3G11940.2"/>
    <property type="gene ID" value="AT3G11940"/>
</dbReference>
<dbReference type="GeneID" id="820367"/>
<dbReference type="Gramene" id="AT3G11940.1">
    <property type="protein sequence ID" value="AT3G11940.1"/>
    <property type="gene ID" value="AT3G11940"/>
</dbReference>
<dbReference type="Gramene" id="AT3G11940.2">
    <property type="protein sequence ID" value="AT3G11940.2"/>
    <property type="gene ID" value="AT3G11940"/>
</dbReference>
<dbReference type="KEGG" id="ath:AT3G11940"/>
<dbReference type="Araport" id="AT3G11940"/>
<dbReference type="TAIR" id="AT3G11940">
    <property type="gene designation" value="RPS5A"/>
</dbReference>
<dbReference type="eggNOG" id="KOG3291">
    <property type="taxonomic scope" value="Eukaryota"/>
</dbReference>
<dbReference type="HOGENOM" id="CLU_063975_0_0_1"/>
<dbReference type="InParanoid" id="P51427"/>
<dbReference type="OMA" id="QANEWPE"/>
<dbReference type="OrthoDB" id="1041386at2759"/>
<dbReference type="PhylomeDB" id="P51427"/>
<dbReference type="CD-CODE" id="4299E36E">
    <property type="entry name" value="Nucleolus"/>
</dbReference>
<dbReference type="PRO" id="PR:P51427"/>
<dbReference type="Proteomes" id="UP000006548">
    <property type="component" value="Chromosome 3"/>
</dbReference>
<dbReference type="ExpressionAtlas" id="P51427">
    <property type="expression patterns" value="baseline and differential"/>
</dbReference>
<dbReference type="GO" id="GO:0005829">
    <property type="term" value="C:cytosol"/>
    <property type="evidence" value="ECO:0007005"/>
    <property type="project" value="TAIR"/>
</dbReference>
<dbReference type="GO" id="GO:0022626">
    <property type="term" value="C:cytosolic ribosome"/>
    <property type="evidence" value="ECO:0007005"/>
    <property type="project" value="TAIR"/>
</dbReference>
<dbReference type="GO" id="GO:0009505">
    <property type="term" value="C:plant-type cell wall"/>
    <property type="evidence" value="ECO:0007005"/>
    <property type="project" value="TAIR"/>
</dbReference>
<dbReference type="GO" id="GO:0000325">
    <property type="term" value="C:plant-type vacuole"/>
    <property type="evidence" value="ECO:0007005"/>
    <property type="project" value="TAIR"/>
</dbReference>
<dbReference type="GO" id="GO:0009506">
    <property type="term" value="C:plasmodesma"/>
    <property type="evidence" value="ECO:0007005"/>
    <property type="project" value="TAIR"/>
</dbReference>
<dbReference type="GO" id="GO:0015935">
    <property type="term" value="C:small ribosomal subunit"/>
    <property type="evidence" value="ECO:0007669"/>
    <property type="project" value="InterPro"/>
</dbReference>
<dbReference type="GO" id="GO:0003729">
    <property type="term" value="F:mRNA binding"/>
    <property type="evidence" value="ECO:0000314"/>
    <property type="project" value="TAIR"/>
</dbReference>
<dbReference type="GO" id="GO:0003735">
    <property type="term" value="F:structural constituent of ribosome"/>
    <property type="evidence" value="ECO:0007669"/>
    <property type="project" value="InterPro"/>
</dbReference>
<dbReference type="GO" id="GO:0006412">
    <property type="term" value="P:translation"/>
    <property type="evidence" value="ECO:0007669"/>
    <property type="project" value="InterPro"/>
</dbReference>
<dbReference type="CDD" id="cd14867">
    <property type="entry name" value="uS7_Eukaryote"/>
    <property type="match status" value="1"/>
</dbReference>
<dbReference type="FunFam" id="1.10.455.10:FF:000002">
    <property type="entry name" value="40S ribosomal protein S5"/>
    <property type="match status" value="1"/>
</dbReference>
<dbReference type="Gene3D" id="1.10.455.10">
    <property type="entry name" value="Ribosomal protein S7 domain"/>
    <property type="match status" value="1"/>
</dbReference>
<dbReference type="InterPro" id="IPR000235">
    <property type="entry name" value="Ribosomal_uS7"/>
</dbReference>
<dbReference type="InterPro" id="IPR020606">
    <property type="entry name" value="Ribosomal_uS7_CS"/>
</dbReference>
<dbReference type="InterPro" id="IPR023798">
    <property type="entry name" value="Ribosomal_uS7_dom"/>
</dbReference>
<dbReference type="InterPro" id="IPR036823">
    <property type="entry name" value="Ribosomal_uS7_dom_sf"/>
</dbReference>
<dbReference type="InterPro" id="IPR005716">
    <property type="entry name" value="Ribosomal_uS7_euk/arc"/>
</dbReference>
<dbReference type="NCBIfam" id="NF003106">
    <property type="entry name" value="PRK04027.1"/>
    <property type="match status" value="1"/>
</dbReference>
<dbReference type="NCBIfam" id="TIGR01028">
    <property type="entry name" value="uS7_euk_arch"/>
    <property type="match status" value="1"/>
</dbReference>
<dbReference type="PANTHER" id="PTHR11205">
    <property type="entry name" value="RIBOSOMAL PROTEIN S7"/>
    <property type="match status" value="1"/>
</dbReference>
<dbReference type="Pfam" id="PF00177">
    <property type="entry name" value="Ribosomal_S7"/>
    <property type="match status" value="1"/>
</dbReference>
<dbReference type="PIRSF" id="PIRSF002122">
    <property type="entry name" value="RPS7p_RPS7a_RPS5e_RPS7o"/>
    <property type="match status" value="1"/>
</dbReference>
<dbReference type="SUPFAM" id="SSF47973">
    <property type="entry name" value="Ribosomal protein S7"/>
    <property type="match status" value="1"/>
</dbReference>
<dbReference type="PROSITE" id="PS00052">
    <property type="entry name" value="RIBOSOMAL_S7"/>
    <property type="match status" value="1"/>
</dbReference>
<feature type="initiator methionine" description="Removed" evidence="6">
    <location>
        <position position="1"/>
    </location>
</feature>
<feature type="chain" id="PRO_0000124535" description="Small ribosomal subunit protein uS7y">
    <location>
        <begin position="2"/>
        <end position="207"/>
    </location>
</feature>
<feature type="modified residue" description="N-acetylalanine" evidence="6">
    <location>
        <position position="2"/>
    </location>
</feature>
<protein>
    <recommendedName>
        <fullName evidence="4">Small ribosomal subunit protein uS7y</fullName>
    </recommendedName>
    <alternativeName>
        <fullName>40S ribosomal protein S5-2</fullName>
    </alternativeName>
    <alternativeName>
        <fullName evidence="3">AtRPS5A</fullName>
    </alternativeName>
    <alternativeName>
        <fullName evidence="3">Protein ARABIDOPSIS MINUTE-LIKE 1</fullName>
    </alternativeName>
</protein>
<evidence type="ECO:0000269" key="1">
    <source>
    </source>
</evidence>
<evidence type="ECO:0000303" key="2">
    <source>
    </source>
</evidence>
<evidence type="ECO:0000303" key="3">
    <source>
    </source>
</evidence>
<evidence type="ECO:0000303" key="4">
    <source>
    </source>
</evidence>
<evidence type="ECO:0000305" key="5"/>
<evidence type="ECO:0007744" key="6">
    <source>
    </source>
</evidence>
<accession>P51427</accession>
<accession>Q9SF05</accession>
<sequence length="207" mass="22921">MATAADVDAEIQQALTNEVKLFNRWTYDDVTVTDISLVDYIGVQAAKHATFVPHTAGRYSVKRFRKAQCPIVERLTNSLMMHGRNNGKKLMAVRIVKHAMEIIHLLSDLNPIQVIIDAIVNSGPREDATRIGSAGVVRRQAVDISPLRRVNQAIFLITTGAREAAFRNIKTIAECLADELINAAKGSSNSYAIKKKDEIERVAKANR</sequence>